<proteinExistence type="evidence at protein level"/>
<name>CNO6L_MOUSE</name>
<comment type="function">
    <text evidence="1">Poly(A) nuclease with 3'-5' RNase activity. Catalytic component of the CCR4-NOT complex which is one of the major cellular mRNA deadenylases and is linked to various cellular processes including bulk mRNA degradation, miRNA-mediated repression, translational repression during translational initiation and general transcription regulation. Additional complex functions may be a consequence of its influence on mRNA expression. Involved in mRNA decay mediated by the major-protein-coding determinant of instability (mCRD) of the FOS gene in the cytoplasm. Involved in deadenylation-dependent degradation of CDKN1B mRNA. Its mRNA deadenylase activity can be inhibited by TOB1. Mediates cell proliferation and cell survival and prevents cellular senescence (By similarity).</text>
</comment>
<comment type="catalytic activity">
    <reaction evidence="2">
        <text>Exonucleolytic cleavage of poly(A) to 5'-AMP.</text>
        <dbReference type="EC" id="3.1.13.4"/>
    </reaction>
</comment>
<comment type="cofactor">
    <cofactor evidence="2">
        <name>Mg(2+)</name>
        <dbReference type="ChEBI" id="CHEBI:18420"/>
    </cofactor>
    <text evidence="2">Binds 2 magnesium ions, but the ions interact each with only 1 or 2 residues.</text>
</comment>
<comment type="subunit">
    <text evidence="2 3 4 6">Component of the CCR4-NOT complex; distinct complexes seem to exist that differ in the participation of probably mutually exclusive catalytic subunits; the complex contains two deadenylase subunits, CNOT6 or CNOT6L, and CNOT7 or CNOT8 (By similarity). Interacts with CNOT1, CNOT3, CNOT7, CNOT8 and CNOT9 (By similarity). Interacts with TOB1 (By similarity). Interacts with NANOS2 (PubMed:20133598). Interacts with ZFP36 (PubMed:21078877). Interacts with ZFP36L2 (By similarity). Interacts with RBM46 (PubMed:36001654).</text>
</comment>
<comment type="interaction">
    <interactant intactId="EBI-2104661">
        <id>Q8VEG6</id>
    </interactant>
    <interactant intactId="EBI-2104739">
        <id>Q60809</id>
        <label>Cnot7</label>
    </interactant>
    <organismsDiffer>false</organismsDiffer>
    <experiments>2</experiments>
</comment>
<comment type="subcellular location">
    <subcellularLocation>
        <location evidence="2">Cytoplasm</location>
    </subcellularLocation>
    <subcellularLocation>
        <location evidence="2">Nucleus</location>
    </subcellularLocation>
    <text evidence="2">Predominantly cytoplasmic.</text>
</comment>
<comment type="alternative products">
    <event type="alternative splicing"/>
    <isoform>
        <id>Q8VEG6-1</id>
        <name>1</name>
        <sequence type="displayed"/>
    </isoform>
    <isoform>
        <id>Q8VEG6-2</id>
        <name>2</name>
        <sequence type="described" ref="VSP_030324"/>
    </isoform>
    <isoform>
        <id>Q8VEG6-3</id>
        <name>3</name>
        <sequence type="described" ref="VSP_030324 VSP_030325 VSP_030326"/>
    </isoform>
</comment>
<comment type="developmental stage">
    <text evidence="5">Expressed in embryonic stem (ES) cells.</text>
</comment>
<comment type="similarity">
    <text evidence="9">Belongs to the CCR4/nocturin family.</text>
</comment>
<comment type="sequence caution" evidence="9">
    <conflict type="frameshift">
        <sequence resource="EMBL-CDS" id="BAC26790"/>
    </conflict>
</comment>
<feature type="chain" id="PRO_0000314588" description="CCR4-NOT transcription complex subunit 6-like">
    <location>
        <begin position="1"/>
        <end position="555"/>
    </location>
</feature>
<feature type="repeat" description="LRR 1">
    <location>
        <begin position="57"/>
        <end position="78"/>
    </location>
</feature>
<feature type="repeat" description="LRR 2">
    <location>
        <begin position="80"/>
        <end position="101"/>
    </location>
</feature>
<feature type="repeat" description="LRR 3">
    <location>
        <begin position="103"/>
        <end position="125"/>
    </location>
</feature>
<feature type="repeat" description="LRR 4">
    <location>
        <begin position="126"/>
        <end position="148"/>
    </location>
</feature>
<feature type="region of interest" description="Required for interaction with CNOT1, CNOT3 and CNOT7" evidence="1">
    <location>
        <begin position="1"/>
        <end position="152"/>
    </location>
</feature>
<feature type="region of interest" description="Nuclease domain" evidence="1">
    <location>
        <begin position="158"/>
        <end position="555"/>
    </location>
</feature>
<feature type="active site" description="Proton donor/acceptor" evidence="2">
    <location>
        <position position="410"/>
    </location>
</feature>
<feature type="binding site" evidence="2">
    <location>
        <position position="240"/>
    </location>
    <ligand>
        <name>Mg(2+)</name>
        <dbReference type="ChEBI" id="CHEBI:18420"/>
        <label>1</label>
    </ligand>
</feature>
<feature type="binding site" evidence="2">
    <location>
        <position position="240"/>
    </location>
    <ligand>
        <name>substrate</name>
    </ligand>
</feature>
<feature type="binding site" evidence="2">
    <location>
        <position position="276"/>
    </location>
    <ligand>
        <name>substrate</name>
    </ligand>
</feature>
<feature type="binding site" evidence="2">
    <location>
        <position position="360"/>
    </location>
    <ligand>
        <name>substrate</name>
    </ligand>
</feature>
<feature type="binding site" evidence="2">
    <location>
        <position position="365"/>
    </location>
    <ligand>
        <name>substrate</name>
    </ligand>
</feature>
<feature type="binding site" evidence="2">
    <location>
        <position position="410"/>
    </location>
    <ligand>
        <name>Mg(2+)</name>
        <dbReference type="ChEBI" id="CHEBI:18420"/>
        <label>2</label>
    </ligand>
</feature>
<feature type="binding site" evidence="2">
    <location>
        <position position="412"/>
    </location>
    <ligand>
        <name>substrate</name>
    </ligand>
</feature>
<feature type="binding site" evidence="2">
    <location>
        <position position="479"/>
    </location>
    <ligand>
        <name>substrate</name>
    </ligand>
</feature>
<feature type="binding site" evidence="2">
    <location>
        <position position="484"/>
    </location>
    <ligand>
        <name>substrate</name>
    </ligand>
</feature>
<feature type="splice variant" id="VSP_030324" description="In isoform 2 and isoform 3." evidence="7 8">
    <original>MRLIGM</original>
    <variation>M</variation>
    <location>
        <begin position="1"/>
        <end position="6"/>
    </location>
</feature>
<feature type="splice variant" id="VSP_030325" description="In isoform 3." evidence="8">
    <original>Y</original>
    <variation>V</variation>
    <location>
        <position position="440"/>
    </location>
</feature>
<feature type="splice variant" id="VSP_030326" description="In isoform 3." evidence="8">
    <location>
        <begin position="441"/>
        <end position="555"/>
    </location>
</feature>
<feature type="sequence conflict" description="In Ref. 1; BAE30646." evidence="9" ref="1">
    <original>L</original>
    <variation>F</variation>
    <location>
        <position position="238"/>
    </location>
</feature>
<accession>Q8VEG6</accession>
<accession>Q3U9M0</accession>
<accession>Q8C0P4</accession>
<keyword id="KW-0025">Alternative splicing</keyword>
<keyword id="KW-0963">Cytoplasm</keyword>
<keyword id="KW-0903">Direct protein sequencing</keyword>
<keyword id="KW-0269">Exonuclease</keyword>
<keyword id="KW-0378">Hydrolase</keyword>
<keyword id="KW-0433">Leucine-rich repeat</keyword>
<keyword id="KW-0460">Magnesium</keyword>
<keyword id="KW-0479">Metal-binding</keyword>
<keyword id="KW-0507">mRNA processing</keyword>
<keyword id="KW-0540">Nuclease</keyword>
<keyword id="KW-0539">Nucleus</keyword>
<keyword id="KW-1185">Reference proteome</keyword>
<keyword id="KW-0677">Repeat</keyword>
<keyword id="KW-0943">RNA-mediated gene silencing</keyword>
<keyword id="KW-0804">Transcription</keyword>
<keyword id="KW-0805">Transcription regulation</keyword>
<keyword id="KW-0810">Translation regulation</keyword>
<sequence>MRLIGMPKEKYDPPDPRRIYTIMSAEEVANGKKSHWAELEISGRVRSLSTSLWSLTHLTALHLNDNNLARIPPDIAKLHNLVYLDLSSNKLRSLPAELGNMVSLRELLLNDNYLRVLPYELGRLFQLQTLGLTGNPLSQDIMSLYQDPDGTRKLLNFMLDNLAVHPEQLPPRPWITLKERDQILPSASFTVMCYNVLCDKYATRQLYGYCPSWALNWEYRKKGIMEEIVNWDADIISLQEVETEQYFTLFLPALKDRGYDGFFSPKSRAKIMSEQERKHVDGCAIFFKTEKFTLVQKHTVEFNQVAMANSDGSEAMLNRVMTKDNIGVAVVLEVHKELFGTGMKPIHAADKQLLIVANAHMHWDPEYSDVKLIQTMMFVSEVKNILEKASSRPGSPTADPNSIPLVLCADLNSLPDSGVVEYLSNGGVADNHKDFKELRYNECLMNFSCSGKNGSSEGRITHGFQLKSAYENNLMPYTNYTFDFKGVIDYIFYSKTHMNVLGVLGPLDPQWLVENNITGCPHPHIPSDHFSLLTQLELHPPLLPLVNGVHLPNRR</sequence>
<evidence type="ECO:0000250" key="1"/>
<evidence type="ECO:0000250" key="2">
    <source>
        <dbReference type="UniProtKB" id="Q96LI5"/>
    </source>
</evidence>
<evidence type="ECO:0000269" key="3">
    <source>
    </source>
</evidence>
<evidence type="ECO:0000269" key="4">
    <source>
    </source>
</evidence>
<evidence type="ECO:0000269" key="5">
    <source>
    </source>
</evidence>
<evidence type="ECO:0000269" key="6">
    <source>
    </source>
</evidence>
<evidence type="ECO:0000303" key="7">
    <source>
    </source>
</evidence>
<evidence type="ECO:0000303" key="8">
    <source>
    </source>
</evidence>
<evidence type="ECO:0000305" key="9"/>
<protein>
    <recommendedName>
        <fullName>CCR4-NOT transcription complex subunit 6-like</fullName>
        <ecNumber evidence="2">3.1.13.4</ecNumber>
    </recommendedName>
</protein>
<organism>
    <name type="scientific">Mus musculus</name>
    <name type="common">Mouse</name>
    <dbReference type="NCBI Taxonomy" id="10090"/>
    <lineage>
        <taxon>Eukaryota</taxon>
        <taxon>Metazoa</taxon>
        <taxon>Chordata</taxon>
        <taxon>Craniata</taxon>
        <taxon>Vertebrata</taxon>
        <taxon>Euteleostomi</taxon>
        <taxon>Mammalia</taxon>
        <taxon>Eutheria</taxon>
        <taxon>Euarchontoglires</taxon>
        <taxon>Glires</taxon>
        <taxon>Rodentia</taxon>
        <taxon>Myomorpha</taxon>
        <taxon>Muroidea</taxon>
        <taxon>Muridae</taxon>
        <taxon>Murinae</taxon>
        <taxon>Mus</taxon>
        <taxon>Mus</taxon>
    </lineage>
</organism>
<gene>
    <name type="primary">Cnot6l</name>
</gene>
<reference key="1">
    <citation type="journal article" date="2005" name="Science">
        <title>The transcriptional landscape of the mammalian genome.</title>
        <authorList>
            <person name="Carninci P."/>
            <person name="Kasukawa T."/>
            <person name="Katayama S."/>
            <person name="Gough J."/>
            <person name="Frith M.C."/>
            <person name="Maeda N."/>
            <person name="Oyama R."/>
            <person name="Ravasi T."/>
            <person name="Lenhard B."/>
            <person name="Wells C."/>
            <person name="Kodzius R."/>
            <person name="Shimokawa K."/>
            <person name="Bajic V.B."/>
            <person name="Brenner S.E."/>
            <person name="Batalov S."/>
            <person name="Forrest A.R."/>
            <person name="Zavolan M."/>
            <person name="Davis M.J."/>
            <person name="Wilming L.G."/>
            <person name="Aidinis V."/>
            <person name="Allen J.E."/>
            <person name="Ambesi-Impiombato A."/>
            <person name="Apweiler R."/>
            <person name="Aturaliya R.N."/>
            <person name="Bailey T.L."/>
            <person name="Bansal M."/>
            <person name="Baxter L."/>
            <person name="Beisel K.W."/>
            <person name="Bersano T."/>
            <person name="Bono H."/>
            <person name="Chalk A.M."/>
            <person name="Chiu K.P."/>
            <person name="Choudhary V."/>
            <person name="Christoffels A."/>
            <person name="Clutterbuck D.R."/>
            <person name="Crowe M.L."/>
            <person name="Dalla E."/>
            <person name="Dalrymple B.P."/>
            <person name="de Bono B."/>
            <person name="Della Gatta G."/>
            <person name="di Bernardo D."/>
            <person name="Down T."/>
            <person name="Engstrom P."/>
            <person name="Fagiolini M."/>
            <person name="Faulkner G."/>
            <person name="Fletcher C.F."/>
            <person name="Fukushima T."/>
            <person name="Furuno M."/>
            <person name="Futaki S."/>
            <person name="Gariboldi M."/>
            <person name="Georgii-Hemming P."/>
            <person name="Gingeras T.R."/>
            <person name="Gojobori T."/>
            <person name="Green R.E."/>
            <person name="Gustincich S."/>
            <person name="Harbers M."/>
            <person name="Hayashi Y."/>
            <person name="Hensch T.K."/>
            <person name="Hirokawa N."/>
            <person name="Hill D."/>
            <person name="Huminiecki L."/>
            <person name="Iacono M."/>
            <person name="Ikeo K."/>
            <person name="Iwama A."/>
            <person name="Ishikawa T."/>
            <person name="Jakt M."/>
            <person name="Kanapin A."/>
            <person name="Katoh M."/>
            <person name="Kawasawa Y."/>
            <person name="Kelso J."/>
            <person name="Kitamura H."/>
            <person name="Kitano H."/>
            <person name="Kollias G."/>
            <person name="Krishnan S.P."/>
            <person name="Kruger A."/>
            <person name="Kummerfeld S.K."/>
            <person name="Kurochkin I.V."/>
            <person name="Lareau L.F."/>
            <person name="Lazarevic D."/>
            <person name="Lipovich L."/>
            <person name="Liu J."/>
            <person name="Liuni S."/>
            <person name="McWilliam S."/>
            <person name="Madan Babu M."/>
            <person name="Madera M."/>
            <person name="Marchionni L."/>
            <person name="Matsuda H."/>
            <person name="Matsuzawa S."/>
            <person name="Miki H."/>
            <person name="Mignone F."/>
            <person name="Miyake S."/>
            <person name="Morris K."/>
            <person name="Mottagui-Tabar S."/>
            <person name="Mulder N."/>
            <person name="Nakano N."/>
            <person name="Nakauchi H."/>
            <person name="Ng P."/>
            <person name="Nilsson R."/>
            <person name="Nishiguchi S."/>
            <person name="Nishikawa S."/>
            <person name="Nori F."/>
            <person name="Ohara O."/>
            <person name="Okazaki Y."/>
            <person name="Orlando V."/>
            <person name="Pang K.C."/>
            <person name="Pavan W.J."/>
            <person name="Pavesi G."/>
            <person name="Pesole G."/>
            <person name="Petrovsky N."/>
            <person name="Piazza S."/>
            <person name="Reed J."/>
            <person name="Reid J.F."/>
            <person name="Ring B.Z."/>
            <person name="Ringwald M."/>
            <person name="Rost B."/>
            <person name="Ruan Y."/>
            <person name="Salzberg S.L."/>
            <person name="Sandelin A."/>
            <person name="Schneider C."/>
            <person name="Schoenbach C."/>
            <person name="Sekiguchi K."/>
            <person name="Semple C.A."/>
            <person name="Seno S."/>
            <person name="Sessa L."/>
            <person name="Sheng Y."/>
            <person name="Shibata Y."/>
            <person name="Shimada H."/>
            <person name="Shimada K."/>
            <person name="Silva D."/>
            <person name="Sinclair B."/>
            <person name="Sperling S."/>
            <person name="Stupka E."/>
            <person name="Sugiura K."/>
            <person name="Sultana R."/>
            <person name="Takenaka Y."/>
            <person name="Taki K."/>
            <person name="Tammoja K."/>
            <person name="Tan S.L."/>
            <person name="Tang S."/>
            <person name="Taylor M.S."/>
            <person name="Tegner J."/>
            <person name="Teichmann S.A."/>
            <person name="Ueda H.R."/>
            <person name="van Nimwegen E."/>
            <person name="Verardo R."/>
            <person name="Wei C.L."/>
            <person name="Yagi K."/>
            <person name="Yamanishi H."/>
            <person name="Zabarovsky E."/>
            <person name="Zhu S."/>
            <person name="Zimmer A."/>
            <person name="Hide W."/>
            <person name="Bult C."/>
            <person name="Grimmond S.M."/>
            <person name="Teasdale R.D."/>
            <person name="Liu E.T."/>
            <person name="Brusic V."/>
            <person name="Quackenbush J."/>
            <person name="Wahlestedt C."/>
            <person name="Mattick J.S."/>
            <person name="Hume D.A."/>
            <person name="Kai C."/>
            <person name="Sasaki D."/>
            <person name="Tomaru Y."/>
            <person name="Fukuda S."/>
            <person name="Kanamori-Katayama M."/>
            <person name="Suzuki M."/>
            <person name="Aoki J."/>
            <person name="Arakawa T."/>
            <person name="Iida J."/>
            <person name="Imamura K."/>
            <person name="Itoh M."/>
            <person name="Kato T."/>
            <person name="Kawaji H."/>
            <person name="Kawagashira N."/>
            <person name="Kawashima T."/>
            <person name="Kojima M."/>
            <person name="Kondo S."/>
            <person name="Konno H."/>
            <person name="Nakano K."/>
            <person name="Ninomiya N."/>
            <person name="Nishio T."/>
            <person name="Okada M."/>
            <person name="Plessy C."/>
            <person name="Shibata K."/>
            <person name="Shiraki T."/>
            <person name="Suzuki S."/>
            <person name="Tagami M."/>
            <person name="Waki K."/>
            <person name="Watahiki A."/>
            <person name="Okamura-Oho Y."/>
            <person name="Suzuki H."/>
            <person name="Kawai J."/>
            <person name="Hayashizaki Y."/>
        </authorList>
    </citation>
    <scope>NUCLEOTIDE SEQUENCE [LARGE SCALE MRNA] (ISOFORMS 1 AND 3)</scope>
    <source>
        <strain>C57BL/6J</strain>
        <tissue>Bone marrow</tissue>
        <tissue>Testis</tissue>
    </source>
</reference>
<reference key="2">
    <citation type="journal article" date="2009" name="PLoS Biol.">
        <title>Lineage-specific biology revealed by a finished genome assembly of the mouse.</title>
        <authorList>
            <person name="Church D.M."/>
            <person name="Goodstadt L."/>
            <person name="Hillier L.W."/>
            <person name="Zody M.C."/>
            <person name="Goldstein S."/>
            <person name="She X."/>
            <person name="Bult C.J."/>
            <person name="Agarwala R."/>
            <person name="Cherry J.L."/>
            <person name="DiCuccio M."/>
            <person name="Hlavina W."/>
            <person name="Kapustin Y."/>
            <person name="Meric P."/>
            <person name="Maglott D."/>
            <person name="Birtle Z."/>
            <person name="Marques A.C."/>
            <person name="Graves T."/>
            <person name="Zhou S."/>
            <person name="Teague B."/>
            <person name="Potamousis K."/>
            <person name="Churas C."/>
            <person name="Place M."/>
            <person name="Herschleb J."/>
            <person name="Runnheim R."/>
            <person name="Forrest D."/>
            <person name="Amos-Landgraf J."/>
            <person name="Schwartz D.C."/>
            <person name="Cheng Z."/>
            <person name="Lindblad-Toh K."/>
            <person name="Eichler E.E."/>
            <person name="Ponting C.P."/>
        </authorList>
    </citation>
    <scope>NUCLEOTIDE SEQUENCE [LARGE SCALE GENOMIC DNA]</scope>
    <source>
        <strain>C57BL/6J</strain>
    </source>
</reference>
<reference key="3">
    <citation type="journal article" date="2004" name="Genome Res.">
        <title>The status, quality, and expansion of the NIH full-length cDNA project: the Mammalian Gene Collection (MGC).</title>
        <authorList>
            <consortium name="The MGC Project Team"/>
        </authorList>
    </citation>
    <scope>NUCLEOTIDE SEQUENCE [LARGE SCALE MRNA] (ISOFORM 2)</scope>
    <source>
        <strain>FVB/N</strain>
        <tissue>Mammary tumor</tissue>
    </source>
</reference>
<reference key="4">
    <citation type="submission" date="2009-01" db="UniProtKB">
        <authorList>
            <person name="Lubec G."/>
            <person name="Sunyer B."/>
            <person name="Chen W.-Q."/>
        </authorList>
    </citation>
    <scope>PROTEIN SEQUENCE OF 269-277</scope>
    <scope>IDENTIFICATION BY MASS SPECTROMETRY</scope>
    <source>
        <strain>OF1</strain>
        <tissue>Hippocampus</tissue>
    </source>
</reference>
<reference key="5">
    <citation type="journal article" date="2010" name="Proc. Natl. Acad. Sci. U.S.A.">
        <title>NANOS2 interacts with the CCR4-NOT deadenylation complex and leads to suppression of specific RNAs.</title>
        <authorList>
            <person name="Suzuki A."/>
            <person name="Igarashi K."/>
            <person name="Aisaki K."/>
            <person name="Kanno J."/>
            <person name="Saga Y."/>
        </authorList>
    </citation>
    <scope>INTERACTION WITH NANOS2</scope>
</reference>
<reference key="6">
    <citation type="journal article" date="2011" name="Mol. Cell. Biol.">
        <title>Phosphorylation of tristetraprolin by MK2 impairs AU-rich element mRNA decay by preventing deadenylase recruitment.</title>
        <authorList>
            <person name="Clement S.L."/>
            <person name="Scheckel C."/>
            <person name="Stoecklin G."/>
            <person name="Lykke-Andersen J."/>
        </authorList>
    </citation>
    <scope>INTERACTION WITH ZFP36</scope>
</reference>
<reference key="7">
    <citation type="journal article" date="2012" name="Stem Cells">
        <title>Cnot1, Cnot2, and Cnot3 maintain mouse and human ESC identity and inhibit extraembryonic differentiation.</title>
        <authorList>
            <person name="Zheng X."/>
            <person name="Dumitru R."/>
            <person name="Lackford B.L."/>
            <person name="Freudenberg J.M."/>
            <person name="Singh A.P."/>
            <person name="Archer T.K."/>
            <person name="Jothi R."/>
            <person name="Hu G."/>
        </authorList>
    </citation>
    <scope>DEVELOPMENTAL STAGE</scope>
</reference>
<reference key="8">
    <citation type="journal article" date="2022" name="Sci. Adv.">
        <title>RNA binding protein RBM46 regulates mitotic-to-meiotic transition in spermatogenesis.</title>
        <authorList>
            <person name="Qian B."/>
            <person name="Li Y."/>
            <person name="Yan R."/>
            <person name="Han S."/>
            <person name="Bu Z."/>
            <person name="Gong J."/>
            <person name="Zheng B."/>
            <person name="Yuan Z."/>
            <person name="Ren S."/>
            <person name="He Q."/>
            <person name="Zhang J."/>
            <person name="Xu C."/>
            <person name="Wang R."/>
            <person name="Sun Z."/>
            <person name="Lin M."/>
            <person name="Zhou J."/>
            <person name="Ye L."/>
        </authorList>
    </citation>
    <scope>INTERACTION WITH RBM46</scope>
</reference>
<dbReference type="EC" id="3.1.13.4" evidence="2"/>
<dbReference type="EMBL" id="AK030112">
    <property type="protein sequence ID" value="BAC26790.1"/>
    <property type="status" value="ALT_FRAME"/>
    <property type="molecule type" value="mRNA"/>
</dbReference>
<dbReference type="EMBL" id="AK151728">
    <property type="protein sequence ID" value="BAE30646.1"/>
    <property type="molecule type" value="mRNA"/>
</dbReference>
<dbReference type="EMBL" id="AC129600">
    <property type="status" value="NOT_ANNOTATED_CDS"/>
    <property type="molecule type" value="Genomic_DNA"/>
</dbReference>
<dbReference type="EMBL" id="AC149285">
    <property type="status" value="NOT_ANNOTATED_CDS"/>
    <property type="molecule type" value="Genomic_DNA"/>
</dbReference>
<dbReference type="EMBL" id="BC018506">
    <property type="protein sequence ID" value="AAH18506.1"/>
    <property type="molecule type" value="mRNA"/>
</dbReference>
<dbReference type="CCDS" id="CCDS19448.1">
    <molecule id="Q8VEG6-2"/>
</dbReference>
<dbReference type="CCDS" id="CCDS51566.1">
    <molecule id="Q8VEG6-1"/>
</dbReference>
<dbReference type="RefSeq" id="NP_001272440.1">
    <molecule id="Q8VEG6-2"/>
    <property type="nucleotide sequence ID" value="NM_001285511.1"/>
</dbReference>
<dbReference type="RefSeq" id="NP_001272443.1">
    <property type="nucleotide sequence ID" value="NM_001285514.1"/>
</dbReference>
<dbReference type="RefSeq" id="NP_659159.1">
    <molecule id="Q8VEG6-2"/>
    <property type="nucleotide sequence ID" value="NM_144910.2"/>
</dbReference>
<dbReference type="RefSeq" id="NP_849185.2">
    <molecule id="Q8VEG6-1"/>
    <property type="nucleotide sequence ID" value="NM_178854.4"/>
</dbReference>
<dbReference type="RefSeq" id="XP_006534933.1">
    <molecule id="Q8VEG6-2"/>
    <property type="nucleotide sequence ID" value="XM_006534870.5"/>
</dbReference>
<dbReference type="RefSeq" id="XP_006534934.1">
    <molecule id="Q8VEG6-2"/>
    <property type="nucleotide sequence ID" value="XM_006534871.3"/>
</dbReference>
<dbReference type="SMR" id="Q8VEG6"/>
<dbReference type="BioGRID" id="231124">
    <property type="interactions" value="1"/>
</dbReference>
<dbReference type="CORUM" id="Q8VEG6"/>
<dbReference type="DIP" id="DIP-46842N"/>
<dbReference type="FunCoup" id="Q8VEG6">
    <property type="interactions" value="4251"/>
</dbReference>
<dbReference type="IntAct" id="Q8VEG6">
    <property type="interactions" value="5"/>
</dbReference>
<dbReference type="MINT" id="Q8VEG6"/>
<dbReference type="STRING" id="10090.ENSMUSP00000108629"/>
<dbReference type="iPTMnet" id="Q8VEG6"/>
<dbReference type="PhosphoSitePlus" id="Q8VEG6"/>
<dbReference type="PaxDb" id="10090-ENSMUSP00000119415"/>
<dbReference type="PeptideAtlas" id="Q8VEG6"/>
<dbReference type="ProteomicsDB" id="283457">
    <molecule id="Q8VEG6-1"/>
</dbReference>
<dbReference type="ProteomicsDB" id="283458">
    <molecule id="Q8VEG6-2"/>
</dbReference>
<dbReference type="ProteomicsDB" id="283459">
    <molecule id="Q8VEG6-3"/>
</dbReference>
<dbReference type="Pumba" id="Q8VEG6"/>
<dbReference type="Antibodypedia" id="50898">
    <property type="antibodies" value="60 antibodies from 14 providers"/>
</dbReference>
<dbReference type="DNASU" id="231464"/>
<dbReference type="Ensembl" id="ENSMUST00000113005.9">
    <molecule id="Q8VEG6-1"/>
    <property type="protein sequence ID" value="ENSMUSP00000108629.3"/>
    <property type="gene ID" value="ENSMUSG00000034724.19"/>
</dbReference>
<dbReference type="Ensembl" id="ENSMUST00000122003.8">
    <molecule id="Q8VEG6-3"/>
    <property type="protein sequence ID" value="ENSMUSP00000113821.2"/>
    <property type="gene ID" value="ENSMUSG00000034724.19"/>
</dbReference>
<dbReference type="Ensembl" id="ENSMUST00000155901.8">
    <molecule id="Q8VEG6-2"/>
    <property type="protein sequence ID" value="ENSMUSP00000119415.2"/>
    <property type="gene ID" value="ENSMUSG00000034724.19"/>
</dbReference>
<dbReference type="GeneID" id="231464"/>
<dbReference type="KEGG" id="mmu:231464"/>
<dbReference type="UCSC" id="uc008yfd.2">
    <molecule id="Q8VEG6-3"/>
    <property type="organism name" value="mouse"/>
</dbReference>
<dbReference type="UCSC" id="uc008yfe.2">
    <molecule id="Q8VEG6-1"/>
    <property type="organism name" value="mouse"/>
</dbReference>
<dbReference type="AGR" id="MGI:2443154"/>
<dbReference type="CTD" id="246175"/>
<dbReference type="MGI" id="MGI:2443154">
    <property type="gene designation" value="Cnot6l"/>
</dbReference>
<dbReference type="VEuPathDB" id="HostDB:ENSMUSG00000034724"/>
<dbReference type="eggNOG" id="KOG0620">
    <property type="taxonomic scope" value="Eukaryota"/>
</dbReference>
<dbReference type="GeneTree" id="ENSGT00940000157298"/>
<dbReference type="HOGENOM" id="CLU_016428_4_2_1"/>
<dbReference type="InParanoid" id="Q8VEG6"/>
<dbReference type="OrthoDB" id="428734at2759"/>
<dbReference type="PhylomeDB" id="Q8VEG6"/>
<dbReference type="TreeFam" id="TF323175"/>
<dbReference type="Reactome" id="R-MMU-429947">
    <property type="pathway name" value="Deadenylation of mRNA"/>
</dbReference>
<dbReference type="Reactome" id="R-MMU-6804115">
    <property type="pathway name" value="TP53 regulates transcription of additional cell cycle genes whose exact role in the p53 pathway remain uncertain"/>
</dbReference>
<dbReference type="BioGRID-ORCS" id="231464">
    <property type="hits" value="4 hits in 77 CRISPR screens"/>
</dbReference>
<dbReference type="ChiTaRS" id="Cnot6l">
    <property type="organism name" value="mouse"/>
</dbReference>
<dbReference type="PRO" id="PR:Q8VEG6"/>
<dbReference type="Proteomes" id="UP000000589">
    <property type="component" value="Chromosome 5"/>
</dbReference>
<dbReference type="RNAct" id="Q8VEG6">
    <property type="molecule type" value="protein"/>
</dbReference>
<dbReference type="Bgee" id="ENSMUSG00000034724">
    <property type="expression patterns" value="Expressed in hair follicle and 264 other cell types or tissues"/>
</dbReference>
<dbReference type="ExpressionAtlas" id="Q8VEG6">
    <property type="expression patterns" value="baseline and differential"/>
</dbReference>
<dbReference type="GO" id="GO:0030014">
    <property type="term" value="C:CCR4-NOT complex"/>
    <property type="evidence" value="ECO:0000250"/>
    <property type="project" value="UniProtKB"/>
</dbReference>
<dbReference type="GO" id="GO:0005737">
    <property type="term" value="C:cytoplasm"/>
    <property type="evidence" value="ECO:0000314"/>
    <property type="project" value="MGI"/>
</dbReference>
<dbReference type="GO" id="GO:0005829">
    <property type="term" value="C:cytosol"/>
    <property type="evidence" value="ECO:0000304"/>
    <property type="project" value="Reactome"/>
</dbReference>
<dbReference type="GO" id="GO:0005634">
    <property type="term" value="C:nucleus"/>
    <property type="evidence" value="ECO:0000250"/>
    <property type="project" value="UniProtKB"/>
</dbReference>
<dbReference type="GO" id="GO:0046872">
    <property type="term" value="F:metal ion binding"/>
    <property type="evidence" value="ECO:0007669"/>
    <property type="project" value="UniProtKB-KW"/>
</dbReference>
<dbReference type="GO" id="GO:0004535">
    <property type="term" value="F:poly(A)-specific ribonuclease activity"/>
    <property type="evidence" value="ECO:0000315"/>
    <property type="project" value="MGI"/>
</dbReference>
<dbReference type="GO" id="GO:0061157">
    <property type="term" value="P:mRNA destabilization"/>
    <property type="evidence" value="ECO:0000315"/>
    <property type="project" value="MGI"/>
</dbReference>
<dbReference type="GO" id="GO:0006397">
    <property type="term" value="P:mRNA processing"/>
    <property type="evidence" value="ECO:0007669"/>
    <property type="project" value="UniProtKB-KW"/>
</dbReference>
<dbReference type="GO" id="GO:0000288">
    <property type="term" value="P:nuclear-transcribed mRNA catabolic process, deadenylation-dependent decay"/>
    <property type="evidence" value="ECO:0000315"/>
    <property type="project" value="MGI"/>
</dbReference>
<dbReference type="GO" id="GO:0008284">
    <property type="term" value="P:positive regulation of cell population proliferation"/>
    <property type="evidence" value="ECO:0000315"/>
    <property type="project" value="MGI"/>
</dbReference>
<dbReference type="GO" id="GO:0010606">
    <property type="term" value="P:positive regulation of cytoplasmic mRNA processing body assembly"/>
    <property type="evidence" value="ECO:0000250"/>
    <property type="project" value="UniProtKB"/>
</dbReference>
<dbReference type="GO" id="GO:0006417">
    <property type="term" value="P:regulation of translation"/>
    <property type="evidence" value="ECO:0007669"/>
    <property type="project" value="UniProtKB-KW"/>
</dbReference>
<dbReference type="GO" id="GO:0031047">
    <property type="term" value="P:regulatory ncRNA-mediated gene silencing"/>
    <property type="evidence" value="ECO:0007669"/>
    <property type="project" value="UniProtKB-KW"/>
</dbReference>
<dbReference type="CDD" id="cd10312">
    <property type="entry name" value="Deadenylase_CCR4b"/>
    <property type="match status" value="1"/>
</dbReference>
<dbReference type="FunFam" id="3.60.10.10:FF:000002">
    <property type="entry name" value="CCR4-NOT transcription complex subunit 6 like"/>
    <property type="match status" value="1"/>
</dbReference>
<dbReference type="FunFam" id="3.80.10.10:FF:000008">
    <property type="entry name" value="CCR4-NOT transcription complex subunit 6 like"/>
    <property type="match status" value="1"/>
</dbReference>
<dbReference type="Gene3D" id="3.60.10.10">
    <property type="entry name" value="Endonuclease/exonuclease/phosphatase"/>
    <property type="match status" value="1"/>
</dbReference>
<dbReference type="Gene3D" id="3.80.10.10">
    <property type="entry name" value="Ribonuclease Inhibitor"/>
    <property type="match status" value="1"/>
</dbReference>
<dbReference type="InterPro" id="IPR050410">
    <property type="entry name" value="CCR4/nocturin_mRNA_transcr"/>
</dbReference>
<dbReference type="InterPro" id="IPR034967">
    <property type="entry name" value="Deadenylase_CCR4b"/>
</dbReference>
<dbReference type="InterPro" id="IPR036691">
    <property type="entry name" value="Endo/exonu/phosph_ase_sf"/>
</dbReference>
<dbReference type="InterPro" id="IPR005135">
    <property type="entry name" value="Endo/exonuclease/phosphatase"/>
</dbReference>
<dbReference type="InterPro" id="IPR001611">
    <property type="entry name" value="Leu-rich_rpt"/>
</dbReference>
<dbReference type="InterPro" id="IPR003591">
    <property type="entry name" value="Leu-rich_rpt_typical-subtyp"/>
</dbReference>
<dbReference type="InterPro" id="IPR032675">
    <property type="entry name" value="LRR_dom_sf"/>
</dbReference>
<dbReference type="PANTHER" id="PTHR12121">
    <property type="entry name" value="CARBON CATABOLITE REPRESSOR PROTEIN 4"/>
    <property type="match status" value="1"/>
</dbReference>
<dbReference type="PANTHER" id="PTHR12121:SF35">
    <property type="entry name" value="CCR4-NOT TRANSCRIPTION COMPLEX SUBUNIT 6-LIKE"/>
    <property type="match status" value="1"/>
</dbReference>
<dbReference type="Pfam" id="PF03372">
    <property type="entry name" value="Exo_endo_phos"/>
    <property type="match status" value="1"/>
</dbReference>
<dbReference type="Pfam" id="PF13855">
    <property type="entry name" value="LRR_8"/>
    <property type="match status" value="1"/>
</dbReference>
<dbReference type="SMART" id="SM00369">
    <property type="entry name" value="LRR_TYP"/>
    <property type="match status" value="3"/>
</dbReference>
<dbReference type="SUPFAM" id="SSF56219">
    <property type="entry name" value="DNase I-like"/>
    <property type="match status" value="1"/>
</dbReference>
<dbReference type="SUPFAM" id="SSF52058">
    <property type="entry name" value="L domain-like"/>
    <property type="match status" value="1"/>
</dbReference>
<dbReference type="PROSITE" id="PS51450">
    <property type="entry name" value="LRR"/>
    <property type="match status" value="4"/>
</dbReference>